<comment type="function">
    <text evidence="1">Purine salvage pathway enzyme that catalyzes the transfer of the ribosyl-5-phosphate group from 5-phospho-alpha-D-ribose 1-diphosphate (PRPP) to the N9 position of the 6-oxopurines guanine and xanthine to form the corresponding ribonucleotides GMP (guanosine 5'-monophosphate) and XMP (xanthosine 5'-monophosphate), with the release of PPi. To a lesser extent, also acts on hypoxanthine.</text>
</comment>
<comment type="catalytic activity">
    <reaction evidence="1">
        <text>GMP + diphosphate = guanine + 5-phospho-alpha-D-ribose 1-diphosphate</text>
        <dbReference type="Rhea" id="RHEA:25424"/>
        <dbReference type="ChEBI" id="CHEBI:16235"/>
        <dbReference type="ChEBI" id="CHEBI:33019"/>
        <dbReference type="ChEBI" id="CHEBI:58017"/>
        <dbReference type="ChEBI" id="CHEBI:58115"/>
    </reaction>
    <physiologicalReaction direction="right-to-left" evidence="1">
        <dbReference type="Rhea" id="RHEA:25426"/>
    </physiologicalReaction>
</comment>
<comment type="catalytic activity">
    <reaction evidence="1">
        <text>XMP + diphosphate = xanthine + 5-phospho-alpha-D-ribose 1-diphosphate</text>
        <dbReference type="Rhea" id="RHEA:10800"/>
        <dbReference type="ChEBI" id="CHEBI:17712"/>
        <dbReference type="ChEBI" id="CHEBI:33019"/>
        <dbReference type="ChEBI" id="CHEBI:57464"/>
        <dbReference type="ChEBI" id="CHEBI:58017"/>
        <dbReference type="EC" id="2.4.2.22"/>
    </reaction>
    <physiologicalReaction direction="right-to-left" evidence="1">
        <dbReference type="Rhea" id="RHEA:10802"/>
    </physiologicalReaction>
</comment>
<comment type="catalytic activity">
    <reaction evidence="1">
        <text>IMP + diphosphate = hypoxanthine + 5-phospho-alpha-D-ribose 1-diphosphate</text>
        <dbReference type="Rhea" id="RHEA:17973"/>
        <dbReference type="ChEBI" id="CHEBI:17368"/>
        <dbReference type="ChEBI" id="CHEBI:33019"/>
        <dbReference type="ChEBI" id="CHEBI:58017"/>
        <dbReference type="ChEBI" id="CHEBI:58053"/>
    </reaction>
    <physiologicalReaction direction="right-to-left" evidence="1">
        <dbReference type="Rhea" id="RHEA:17975"/>
    </physiologicalReaction>
</comment>
<comment type="cofactor">
    <cofactor evidence="1">
        <name>Mg(2+)</name>
        <dbReference type="ChEBI" id="CHEBI:18420"/>
    </cofactor>
</comment>
<comment type="pathway">
    <text evidence="1">Purine metabolism; GMP biosynthesis via salvage pathway; GMP from guanine: step 1/1.</text>
</comment>
<comment type="pathway">
    <text evidence="1">Purine metabolism; XMP biosynthesis via salvage pathway; XMP from xanthine: step 1/1.</text>
</comment>
<comment type="subunit">
    <text evidence="1">Homotetramer.</text>
</comment>
<comment type="subcellular location">
    <subcellularLocation>
        <location evidence="1">Cell inner membrane</location>
        <topology evidence="1">Peripheral membrane protein</topology>
    </subcellularLocation>
</comment>
<comment type="similarity">
    <text evidence="1">Belongs to the purine/pyrimidine phosphoribosyltransferase family. XGPT subfamily.</text>
</comment>
<feature type="chain" id="PRO_1000088472" description="Xanthine-guanine phosphoribosyltransferase">
    <location>
        <begin position="1"/>
        <end position="165"/>
    </location>
</feature>
<feature type="binding site" evidence="1">
    <location>
        <begin position="41"/>
        <end position="42"/>
    </location>
    <ligand>
        <name>5-phospho-alpha-D-ribose 1-diphosphate</name>
        <dbReference type="ChEBI" id="CHEBI:58017"/>
    </ligand>
</feature>
<feature type="binding site" evidence="1">
    <location>
        <begin position="98"/>
        <end position="106"/>
    </location>
    <ligand>
        <name>5-phospho-alpha-D-ribose 1-diphosphate</name>
        <dbReference type="ChEBI" id="CHEBI:58017"/>
    </ligand>
</feature>
<feature type="binding site" evidence="1">
    <location>
        <position position="99"/>
    </location>
    <ligand>
        <name>Mg(2+)</name>
        <dbReference type="ChEBI" id="CHEBI:18420"/>
    </ligand>
</feature>
<feature type="binding site" evidence="1">
    <location>
        <begin position="102"/>
        <end position="106"/>
    </location>
    <ligand>
        <name>GMP</name>
        <dbReference type="ChEBI" id="CHEBI:58115"/>
    </ligand>
</feature>
<feature type="binding site" evidence="1">
    <location>
        <position position="102"/>
    </location>
    <ligand>
        <name>guanine</name>
        <dbReference type="ChEBI" id="CHEBI:16235"/>
    </ligand>
</feature>
<feature type="binding site" evidence="1">
    <location>
        <position position="102"/>
    </location>
    <ligand>
        <name>xanthine</name>
        <dbReference type="ChEBI" id="CHEBI:17712"/>
    </ligand>
</feature>
<feature type="binding site" evidence="1">
    <location>
        <begin position="144"/>
        <end position="145"/>
    </location>
    <ligand>
        <name>GMP</name>
        <dbReference type="ChEBI" id="CHEBI:58115"/>
    </ligand>
</feature>
<feature type="binding site" evidence="1">
    <location>
        <position position="145"/>
    </location>
    <ligand>
        <name>guanine</name>
        <dbReference type="ChEBI" id="CHEBI:16235"/>
    </ligand>
</feature>
<feature type="binding site" evidence="1">
    <location>
        <position position="145"/>
    </location>
    <ligand>
        <name>xanthine</name>
        <dbReference type="ChEBI" id="CHEBI:17712"/>
    </ligand>
</feature>
<protein>
    <recommendedName>
        <fullName evidence="1">Xanthine-guanine phosphoribosyltransferase</fullName>
        <shortName evidence="1">XGPRT</shortName>
        <ecNumber evidence="1">2.4.2.-</ecNumber>
        <ecNumber evidence="1">2.4.2.22</ecNumber>
    </recommendedName>
    <alternativeName>
        <fullName evidence="1">Xanthine phosphoribosyltransferase</fullName>
    </alternativeName>
</protein>
<dbReference type="EC" id="2.4.2.-" evidence="1"/>
<dbReference type="EC" id="2.4.2.22" evidence="1"/>
<dbReference type="EMBL" id="CP000911">
    <property type="protein sequence ID" value="ABY38147.1"/>
    <property type="molecule type" value="Genomic_DNA"/>
</dbReference>
<dbReference type="RefSeq" id="WP_006072760.1">
    <property type="nucleotide sequence ID" value="NC_010169.1"/>
</dbReference>
<dbReference type="SMR" id="B0CGJ6"/>
<dbReference type="KEGG" id="bmt:BSUIS_A1089"/>
<dbReference type="HOGENOM" id="CLU_080904_3_0_5"/>
<dbReference type="UniPathway" id="UPA00602">
    <property type="reaction ID" value="UER00658"/>
</dbReference>
<dbReference type="UniPathway" id="UPA00909">
    <property type="reaction ID" value="UER00887"/>
</dbReference>
<dbReference type="PRO" id="PR:B0CGJ6"/>
<dbReference type="Proteomes" id="UP000008545">
    <property type="component" value="Chromosome I"/>
</dbReference>
<dbReference type="GO" id="GO:0005886">
    <property type="term" value="C:plasma membrane"/>
    <property type="evidence" value="ECO:0007669"/>
    <property type="project" value="UniProtKB-SubCell"/>
</dbReference>
<dbReference type="GO" id="GO:0052657">
    <property type="term" value="F:guanine phosphoribosyltransferase activity"/>
    <property type="evidence" value="ECO:0007669"/>
    <property type="project" value="RHEA"/>
</dbReference>
<dbReference type="GO" id="GO:0004422">
    <property type="term" value="F:hypoxanthine phosphoribosyltransferase activity"/>
    <property type="evidence" value="ECO:0007669"/>
    <property type="project" value="RHEA"/>
</dbReference>
<dbReference type="GO" id="GO:0000287">
    <property type="term" value="F:magnesium ion binding"/>
    <property type="evidence" value="ECO:0007669"/>
    <property type="project" value="UniProtKB-UniRule"/>
</dbReference>
<dbReference type="GO" id="GO:0000310">
    <property type="term" value="F:xanthine phosphoribosyltransferase activity"/>
    <property type="evidence" value="ECO:0007669"/>
    <property type="project" value="UniProtKB-UniRule"/>
</dbReference>
<dbReference type="GO" id="GO:0032263">
    <property type="term" value="P:GMP salvage"/>
    <property type="evidence" value="ECO:0007669"/>
    <property type="project" value="UniProtKB-UniRule"/>
</dbReference>
<dbReference type="GO" id="GO:0006166">
    <property type="term" value="P:purine ribonucleoside salvage"/>
    <property type="evidence" value="ECO:0007669"/>
    <property type="project" value="UniProtKB-KW"/>
</dbReference>
<dbReference type="GO" id="GO:0032265">
    <property type="term" value="P:XMP salvage"/>
    <property type="evidence" value="ECO:0007669"/>
    <property type="project" value="UniProtKB-UniRule"/>
</dbReference>
<dbReference type="CDD" id="cd06223">
    <property type="entry name" value="PRTases_typeI"/>
    <property type="match status" value="1"/>
</dbReference>
<dbReference type="Gene3D" id="3.40.50.2020">
    <property type="match status" value="1"/>
</dbReference>
<dbReference type="HAMAP" id="MF_01903">
    <property type="entry name" value="XGPRT"/>
    <property type="match status" value="1"/>
</dbReference>
<dbReference type="InterPro" id="IPR000836">
    <property type="entry name" value="PRibTrfase_dom"/>
</dbReference>
<dbReference type="InterPro" id="IPR029057">
    <property type="entry name" value="PRTase-like"/>
</dbReference>
<dbReference type="InterPro" id="IPR023747">
    <property type="entry name" value="Xanthine_Guanine_PRibTrfase"/>
</dbReference>
<dbReference type="NCBIfam" id="NF006613">
    <property type="entry name" value="PRK09177.1"/>
    <property type="match status" value="1"/>
</dbReference>
<dbReference type="PANTHER" id="PTHR39563">
    <property type="entry name" value="XANTHINE PHOSPHORIBOSYLTRANSFERASE"/>
    <property type="match status" value="1"/>
</dbReference>
<dbReference type="PANTHER" id="PTHR39563:SF1">
    <property type="entry name" value="XANTHINE-GUANINE PHOSPHORIBOSYLTRANSFERASE"/>
    <property type="match status" value="1"/>
</dbReference>
<dbReference type="Pfam" id="PF00156">
    <property type="entry name" value="Pribosyltran"/>
    <property type="match status" value="1"/>
</dbReference>
<dbReference type="SUPFAM" id="SSF53271">
    <property type="entry name" value="PRTase-like"/>
    <property type="match status" value="1"/>
</dbReference>
<gene>
    <name evidence="1" type="primary">gpt</name>
    <name type="ordered locus">BSUIS_A1089</name>
</gene>
<name>XGPT_BRUSI</name>
<reference key="1">
    <citation type="submission" date="2007-12" db="EMBL/GenBank/DDBJ databases">
        <title>Brucella suis ATCC 23445 whole genome shotgun sequencing project.</title>
        <authorList>
            <person name="Setubal J.C."/>
            <person name="Bowns C."/>
            <person name="Boyle S."/>
            <person name="Crasta O.R."/>
            <person name="Czar M.J."/>
            <person name="Dharmanolla C."/>
            <person name="Gillespie J.J."/>
            <person name="Kenyon R.W."/>
            <person name="Lu J."/>
            <person name="Mane S."/>
            <person name="Mohapatra S."/>
            <person name="Nagrani S."/>
            <person name="Purkayastha A."/>
            <person name="Rajasimha H.K."/>
            <person name="Shallom J.M."/>
            <person name="Shallom S."/>
            <person name="Shukla M."/>
            <person name="Snyder E.E."/>
            <person name="Sobral B.W."/>
            <person name="Wattam A.R."/>
            <person name="Will R."/>
            <person name="Williams K."/>
            <person name="Yoo H."/>
            <person name="Bruce D."/>
            <person name="Detter C."/>
            <person name="Munk C."/>
            <person name="Brettin T.S."/>
        </authorList>
    </citation>
    <scope>NUCLEOTIDE SEQUENCE [LARGE SCALE GENOMIC DNA]</scope>
    <source>
        <strain>ATCC 23445 / NCTC 10510</strain>
    </source>
</reference>
<proteinExistence type="inferred from homology"/>
<accession>B0CGJ6</accession>
<evidence type="ECO:0000255" key="1">
    <source>
        <dbReference type="HAMAP-Rule" id="MF_01903"/>
    </source>
</evidence>
<sequence length="165" mass="18382">MSLPDKAFPVSWDQFHRDARALAWRIAGLDREWRAIVAITRGGLVPAAIICRELGIRLIEIVCIASYHDYTSQGEMQVLKGIGASLLENQGEGVIVVDDLTDTGKTAAIVREMMPRAHFATVYAKPKGRPLIDTFVTEVSQDTWIYFPWDMGFTYQEPIAGGKRG</sequence>
<organism>
    <name type="scientific">Brucella suis (strain ATCC 23445 / NCTC 10510)</name>
    <dbReference type="NCBI Taxonomy" id="470137"/>
    <lineage>
        <taxon>Bacteria</taxon>
        <taxon>Pseudomonadati</taxon>
        <taxon>Pseudomonadota</taxon>
        <taxon>Alphaproteobacteria</taxon>
        <taxon>Hyphomicrobiales</taxon>
        <taxon>Brucellaceae</taxon>
        <taxon>Brucella/Ochrobactrum group</taxon>
        <taxon>Brucella</taxon>
    </lineage>
</organism>
<keyword id="KW-0997">Cell inner membrane</keyword>
<keyword id="KW-1003">Cell membrane</keyword>
<keyword id="KW-0328">Glycosyltransferase</keyword>
<keyword id="KW-0460">Magnesium</keyword>
<keyword id="KW-0472">Membrane</keyword>
<keyword id="KW-0479">Metal-binding</keyword>
<keyword id="KW-0660">Purine salvage</keyword>
<keyword id="KW-0808">Transferase</keyword>